<reference key="1">
    <citation type="journal article" date="2007" name="PLoS Genet.">
        <title>Patterns and implications of gene gain and loss in the evolution of Prochlorococcus.</title>
        <authorList>
            <person name="Kettler G.C."/>
            <person name="Martiny A.C."/>
            <person name="Huang K."/>
            <person name="Zucker J."/>
            <person name="Coleman M.L."/>
            <person name="Rodrigue S."/>
            <person name="Chen F."/>
            <person name="Lapidus A."/>
            <person name="Ferriera S."/>
            <person name="Johnson J."/>
            <person name="Steglich C."/>
            <person name="Church G.M."/>
            <person name="Richardson P."/>
            <person name="Chisholm S.W."/>
        </authorList>
    </citation>
    <scope>NUCLEOTIDE SEQUENCE [LARGE SCALE GENOMIC DNA]</scope>
    <source>
        <strain>MIT 9215</strain>
    </source>
</reference>
<protein>
    <recommendedName>
        <fullName evidence="1">NADPH-dependent 7-cyano-7-deazaguanine reductase</fullName>
        <ecNumber evidence="1">1.7.1.13</ecNumber>
    </recommendedName>
    <alternativeName>
        <fullName evidence="1">7-cyano-7-carbaguanine reductase</fullName>
    </alternativeName>
    <alternativeName>
        <fullName evidence="1">NADPH-dependent nitrile oxidoreductase</fullName>
    </alternativeName>
    <alternativeName>
        <fullName evidence="1">PreQ(0) reductase</fullName>
    </alternativeName>
</protein>
<gene>
    <name evidence="1" type="primary">queF</name>
    <name type="ordered locus">P9215_17291</name>
</gene>
<keyword id="KW-0963">Cytoplasm</keyword>
<keyword id="KW-0521">NADP</keyword>
<keyword id="KW-0560">Oxidoreductase</keyword>
<keyword id="KW-0671">Queuosine biosynthesis</keyword>
<evidence type="ECO:0000255" key="1">
    <source>
        <dbReference type="HAMAP-Rule" id="MF_00818"/>
    </source>
</evidence>
<sequence length="136" mass="15827">MSTAKLDDSTQRPLYGERIIKESKIICFENPNKKRIYEISIDLPEFTCKCPFSGYPDFAKLNIIYQPNLRVYELKSLKLYINNFRDIKISHEEVVNRIMDDLLSAGSPHWIHLNASFNPRGNVSMQLDIFSGQKKN</sequence>
<comment type="function">
    <text evidence="1">Catalyzes the NADPH-dependent reduction of 7-cyano-7-deazaguanine (preQ0) to 7-aminomethyl-7-deazaguanine (preQ1).</text>
</comment>
<comment type="catalytic activity">
    <reaction evidence="1">
        <text>7-aminomethyl-7-carbaguanine + 2 NADP(+) = 7-cyano-7-deazaguanine + 2 NADPH + 3 H(+)</text>
        <dbReference type="Rhea" id="RHEA:13409"/>
        <dbReference type="ChEBI" id="CHEBI:15378"/>
        <dbReference type="ChEBI" id="CHEBI:45075"/>
        <dbReference type="ChEBI" id="CHEBI:57783"/>
        <dbReference type="ChEBI" id="CHEBI:58349"/>
        <dbReference type="ChEBI" id="CHEBI:58703"/>
        <dbReference type="EC" id="1.7.1.13"/>
    </reaction>
</comment>
<comment type="pathway">
    <text evidence="1">tRNA modification; tRNA-queuosine biosynthesis.</text>
</comment>
<comment type="subcellular location">
    <subcellularLocation>
        <location evidence="1">Cytoplasm</location>
    </subcellularLocation>
</comment>
<comment type="similarity">
    <text evidence="1">Belongs to the GTP cyclohydrolase I family. QueF type 1 subfamily.</text>
</comment>
<dbReference type="EC" id="1.7.1.13" evidence="1"/>
<dbReference type="EMBL" id="CP000825">
    <property type="protein sequence ID" value="ABV51342.1"/>
    <property type="molecule type" value="Genomic_DNA"/>
</dbReference>
<dbReference type="RefSeq" id="WP_012008362.1">
    <property type="nucleotide sequence ID" value="NC_009840.1"/>
</dbReference>
<dbReference type="SMR" id="A8G6W1"/>
<dbReference type="STRING" id="93060.P9215_17291"/>
<dbReference type="KEGG" id="pmh:P9215_17291"/>
<dbReference type="eggNOG" id="COG0780">
    <property type="taxonomic scope" value="Bacteria"/>
</dbReference>
<dbReference type="HOGENOM" id="CLU_102489_1_1_3"/>
<dbReference type="OrthoDB" id="9795077at2"/>
<dbReference type="UniPathway" id="UPA00392"/>
<dbReference type="Proteomes" id="UP000002014">
    <property type="component" value="Chromosome"/>
</dbReference>
<dbReference type="GO" id="GO:0005737">
    <property type="term" value="C:cytoplasm"/>
    <property type="evidence" value="ECO:0007669"/>
    <property type="project" value="UniProtKB-SubCell"/>
</dbReference>
<dbReference type="GO" id="GO:0033739">
    <property type="term" value="F:preQ1 synthase activity"/>
    <property type="evidence" value="ECO:0007669"/>
    <property type="project" value="UniProtKB-UniRule"/>
</dbReference>
<dbReference type="GO" id="GO:0008616">
    <property type="term" value="P:queuosine biosynthetic process"/>
    <property type="evidence" value="ECO:0007669"/>
    <property type="project" value="UniProtKB-UniRule"/>
</dbReference>
<dbReference type="GO" id="GO:0006400">
    <property type="term" value="P:tRNA modification"/>
    <property type="evidence" value="ECO:0007669"/>
    <property type="project" value="UniProtKB-UniRule"/>
</dbReference>
<dbReference type="Gene3D" id="3.30.1130.10">
    <property type="match status" value="1"/>
</dbReference>
<dbReference type="HAMAP" id="MF_00818">
    <property type="entry name" value="QueF_type1"/>
    <property type="match status" value="1"/>
</dbReference>
<dbReference type="InterPro" id="IPR043133">
    <property type="entry name" value="GTP-CH-I_C/QueF"/>
</dbReference>
<dbReference type="InterPro" id="IPR050084">
    <property type="entry name" value="NADPH_dep_7-cyano-7-deazaG_red"/>
</dbReference>
<dbReference type="InterPro" id="IPR029500">
    <property type="entry name" value="QueF"/>
</dbReference>
<dbReference type="InterPro" id="IPR016856">
    <property type="entry name" value="QueF_type1"/>
</dbReference>
<dbReference type="NCBIfam" id="TIGR03139">
    <property type="entry name" value="QueF-II"/>
    <property type="match status" value="1"/>
</dbReference>
<dbReference type="PANTHER" id="PTHR34354">
    <property type="entry name" value="NADPH-DEPENDENT 7-CYANO-7-DEAZAGUANINE REDUCTASE"/>
    <property type="match status" value="1"/>
</dbReference>
<dbReference type="PANTHER" id="PTHR34354:SF1">
    <property type="entry name" value="NADPH-DEPENDENT 7-CYANO-7-DEAZAGUANINE REDUCTASE"/>
    <property type="match status" value="1"/>
</dbReference>
<dbReference type="Pfam" id="PF14489">
    <property type="entry name" value="QueF"/>
    <property type="match status" value="1"/>
</dbReference>
<dbReference type="PIRSF" id="PIRSF027377">
    <property type="entry name" value="Nitrile_oxidored_QueF"/>
    <property type="match status" value="1"/>
</dbReference>
<dbReference type="SUPFAM" id="SSF55620">
    <property type="entry name" value="Tetrahydrobiopterin biosynthesis enzymes-like"/>
    <property type="match status" value="1"/>
</dbReference>
<proteinExistence type="inferred from homology"/>
<accession>A8G6W1</accession>
<feature type="chain" id="PRO_1000062402" description="NADPH-dependent 7-cyano-7-deazaguanine reductase">
    <location>
        <begin position="1"/>
        <end position="136"/>
    </location>
</feature>
<feature type="active site" description="Thioimide intermediate" evidence="1">
    <location>
        <position position="50"/>
    </location>
</feature>
<feature type="active site" description="Proton donor" evidence="1">
    <location>
        <position position="57"/>
    </location>
</feature>
<feature type="binding site" evidence="1">
    <location>
        <begin position="72"/>
        <end position="74"/>
    </location>
    <ligand>
        <name>substrate</name>
    </ligand>
</feature>
<feature type="binding site" evidence="1">
    <location>
        <begin position="91"/>
        <end position="92"/>
    </location>
    <ligand>
        <name>substrate</name>
    </ligand>
</feature>
<name>QUEF_PROM2</name>
<organism>
    <name type="scientific">Prochlorococcus marinus (strain MIT 9215)</name>
    <dbReference type="NCBI Taxonomy" id="93060"/>
    <lineage>
        <taxon>Bacteria</taxon>
        <taxon>Bacillati</taxon>
        <taxon>Cyanobacteriota</taxon>
        <taxon>Cyanophyceae</taxon>
        <taxon>Synechococcales</taxon>
        <taxon>Prochlorococcaceae</taxon>
        <taxon>Prochlorococcus</taxon>
    </lineage>
</organism>